<proteinExistence type="evidence at protein level"/>
<evidence type="ECO:0000250" key="1">
    <source>
        <dbReference type="UniProtKB" id="Q8N653"/>
    </source>
</evidence>
<evidence type="ECO:0000255" key="2"/>
<evidence type="ECO:0000255" key="3">
    <source>
        <dbReference type="PROSITE-ProRule" id="PRU00037"/>
    </source>
</evidence>
<evidence type="ECO:0000256" key="4">
    <source>
        <dbReference type="SAM" id="MobiDB-lite"/>
    </source>
</evidence>
<evidence type="ECO:0000269" key="5">
    <source>
    </source>
</evidence>
<evidence type="ECO:0000269" key="6">
    <source>
    </source>
</evidence>
<evidence type="ECO:0000303" key="7">
    <source>
    </source>
</evidence>
<evidence type="ECO:0000303" key="8">
    <source>
    </source>
</evidence>
<evidence type="ECO:0000305" key="9"/>
<evidence type="ECO:0000312" key="10">
    <source>
        <dbReference type="FlyBase" id="FBgn0040344"/>
    </source>
</evidence>
<reference key="1">
    <citation type="journal article" date="2000" name="Science">
        <title>The genome sequence of Drosophila melanogaster.</title>
        <authorList>
            <person name="Adams M.D."/>
            <person name="Celniker S.E."/>
            <person name="Holt R.A."/>
            <person name="Evans C.A."/>
            <person name="Gocayne J.D."/>
            <person name="Amanatides P.G."/>
            <person name="Scherer S.E."/>
            <person name="Li P.W."/>
            <person name="Hoskins R.A."/>
            <person name="Galle R.F."/>
            <person name="George R.A."/>
            <person name="Lewis S.E."/>
            <person name="Richards S."/>
            <person name="Ashburner M."/>
            <person name="Henderson S.N."/>
            <person name="Sutton G.G."/>
            <person name="Wortman J.R."/>
            <person name="Yandell M.D."/>
            <person name="Zhang Q."/>
            <person name="Chen L.X."/>
            <person name="Brandon R.C."/>
            <person name="Rogers Y.-H.C."/>
            <person name="Blazej R.G."/>
            <person name="Champe M."/>
            <person name="Pfeiffer B.D."/>
            <person name="Wan K.H."/>
            <person name="Doyle C."/>
            <person name="Baxter E.G."/>
            <person name="Helt G."/>
            <person name="Nelson C.R."/>
            <person name="Miklos G.L.G."/>
            <person name="Abril J.F."/>
            <person name="Agbayani A."/>
            <person name="An H.-J."/>
            <person name="Andrews-Pfannkoch C."/>
            <person name="Baldwin D."/>
            <person name="Ballew R.M."/>
            <person name="Basu A."/>
            <person name="Baxendale J."/>
            <person name="Bayraktaroglu L."/>
            <person name="Beasley E.M."/>
            <person name="Beeson K.Y."/>
            <person name="Benos P.V."/>
            <person name="Berman B.P."/>
            <person name="Bhandari D."/>
            <person name="Bolshakov S."/>
            <person name="Borkova D."/>
            <person name="Botchan M.R."/>
            <person name="Bouck J."/>
            <person name="Brokstein P."/>
            <person name="Brottier P."/>
            <person name="Burtis K.C."/>
            <person name="Busam D.A."/>
            <person name="Butler H."/>
            <person name="Cadieu E."/>
            <person name="Center A."/>
            <person name="Chandra I."/>
            <person name="Cherry J.M."/>
            <person name="Cawley S."/>
            <person name="Dahlke C."/>
            <person name="Davenport L.B."/>
            <person name="Davies P."/>
            <person name="de Pablos B."/>
            <person name="Delcher A."/>
            <person name="Deng Z."/>
            <person name="Mays A.D."/>
            <person name="Dew I."/>
            <person name="Dietz S.M."/>
            <person name="Dodson K."/>
            <person name="Doup L.E."/>
            <person name="Downes M."/>
            <person name="Dugan-Rocha S."/>
            <person name="Dunkov B.C."/>
            <person name="Dunn P."/>
            <person name="Durbin K.J."/>
            <person name="Evangelista C.C."/>
            <person name="Ferraz C."/>
            <person name="Ferriera S."/>
            <person name="Fleischmann W."/>
            <person name="Fosler C."/>
            <person name="Gabrielian A.E."/>
            <person name="Garg N.S."/>
            <person name="Gelbart W.M."/>
            <person name="Glasser K."/>
            <person name="Glodek A."/>
            <person name="Gong F."/>
            <person name="Gorrell J.H."/>
            <person name="Gu Z."/>
            <person name="Guan P."/>
            <person name="Harris M."/>
            <person name="Harris N.L."/>
            <person name="Harvey D.A."/>
            <person name="Heiman T.J."/>
            <person name="Hernandez J.R."/>
            <person name="Houck J."/>
            <person name="Hostin D."/>
            <person name="Houston K.A."/>
            <person name="Howland T.J."/>
            <person name="Wei M.-H."/>
            <person name="Ibegwam C."/>
            <person name="Jalali M."/>
            <person name="Kalush F."/>
            <person name="Karpen G.H."/>
            <person name="Ke Z."/>
            <person name="Kennison J.A."/>
            <person name="Ketchum K.A."/>
            <person name="Kimmel B.E."/>
            <person name="Kodira C.D."/>
            <person name="Kraft C.L."/>
            <person name="Kravitz S."/>
            <person name="Kulp D."/>
            <person name="Lai Z."/>
            <person name="Lasko P."/>
            <person name="Lei Y."/>
            <person name="Levitsky A.A."/>
            <person name="Li J.H."/>
            <person name="Li Z."/>
            <person name="Liang Y."/>
            <person name="Lin X."/>
            <person name="Liu X."/>
            <person name="Mattei B."/>
            <person name="McIntosh T.C."/>
            <person name="McLeod M.P."/>
            <person name="McPherson D."/>
            <person name="Merkulov G."/>
            <person name="Milshina N.V."/>
            <person name="Mobarry C."/>
            <person name="Morris J."/>
            <person name="Moshrefi A."/>
            <person name="Mount S.M."/>
            <person name="Moy M."/>
            <person name="Murphy B."/>
            <person name="Murphy L."/>
            <person name="Muzny D.M."/>
            <person name="Nelson D.L."/>
            <person name="Nelson D.R."/>
            <person name="Nelson K.A."/>
            <person name="Nixon K."/>
            <person name="Nusskern D.R."/>
            <person name="Pacleb J.M."/>
            <person name="Palazzolo M."/>
            <person name="Pittman G.S."/>
            <person name="Pan S."/>
            <person name="Pollard J."/>
            <person name="Puri V."/>
            <person name="Reese M.G."/>
            <person name="Reinert K."/>
            <person name="Remington K."/>
            <person name="Saunders R.D.C."/>
            <person name="Scheeler F."/>
            <person name="Shen H."/>
            <person name="Shue B.C."/>
            <person name="Siden-Kiamos I."/>
            <person name="Simpson M."/>
            <person name="Skupski M.P."/>
            <person name="Smith T.J."/>
            <person name="Spier E."/>
            <person name="Spradling A.C."/>
            <person name="Stapleton M."/>
            <person name="Strong R."/>
            <person name="Sun E."/>
            <person name="Svirskas R."/>
            <person name="Tector C."/>
            <person name="Turner R."/>
            <person name="Venter E."/>
            <person name="Wang A.H."/>
            <person name="Wang X."/>
            <person name="Wang Z.-Y."/>
            <person name="Wassarman D.A."/>
            <person name="Weinstock G.M."/>
            <person name="Weissenbach J."/>
            <person name="Williams S.M."/>
            <person name="Woodage T."/>
            <person name="Worley K.C."/>
            <person name="Wu D."/>
            <person name="Yang S."/>
            <person name="Yao Q.A."/>
            <person name="Ye J."/>
            <person name="Yeh R.-F."/>
            <person name="Zaveri J.S."/>
            <person name="Zhan M."/>
            <person name="Zhang G."/>
            <person name="Zhao Q."/>
            <person name="Zheng L."/>
            <person name="Zheng X.H."/>
            <person name="Zhong F.N."/>
            <person name="Zhong W."/>
            <person name="Zhou X."/>
            <person name="Zhu S.C."/>
            <person name="Zhu X."/>
            <person name="Smith H.O."/>
            <person name="Gibbs R.A."/>
            <person name="Myers E.W."/>
            <person name="Rubin G.M."/>
            <person name="Venter J.C."/>
        </authorList>
    </citation>
    <scope>NUCLEOTIDE SEQUENCE [LARGE SCALE GENOMIC DNA]</scope>
    <source>
        <strain>Berkeley</strain>
    </source>
</reference>
<reference key="2">
    <citation type="journal article" date="2002" name="Genome Biol.">
        <title>Annotation of the Drosophila melanogaster euchromatic genome: a systematic review.</title>
        <authorList>
            <person name="Misra S."/>
            <person name="Crosby M.A."/>
            <person name="Mungall C.J."/>
            <person name="Matthews B.B."/>
            <person name="Campbell K.S."/>
            <person name="Hradecky P."/>
            <person name="Huang Y."/>
            <person name="Kaminker J.S."/>
            <person name="Millburn G.H."/>
            <person name="Prochnik S.E."/>
            <person name="Smith C.D."/>
            <person name="Tupy J.L."/>
            <person name="Whitfield E.J."/>
            <person name="Bayraktaroglu L."/>
            <person name="Berman B.P."/>
            <person name="Bettencourt B.R."/>
            <person name="Celniker S.E."/>
            <person name="de Grey A.D.N.J."/>
            <person name="Drysdale R.A."/>
            <person name="Harris N.L."/>
            <person name="Richter J."/>
            <person name="Russo S."/>
            <person name="Schroeder A.J."/>
            <person name="Shu S.Q."/>
            <person name="Stapleton M."/>
            <person name="Yamada C."/>
            <person name="Ashburner M."/>
            <person name="Gelbart W.M."/>
            <person name="Rubin G.M."/>
            <person name="Lewis S.E."/>
        </authorList>
    </citation>
    <scope>GENOME REANNOTATION</scope>
    <source>
        <strain>Berkeley</strain>
    </source>
</reference>
<reference key="3">
    <citation type="journal article" date="2000" name="Science">
        <title>From sequence to chromosome: the tip of the X chromosome of D. melanogaster.</title>
        <authorList>
            <person name="Benos P.V."/>
            <person name="Gatt M.K."/>
            <person name="Ashburner M."/>
            <person name="Murphy L."/>
            <person name="Harris D."/>
            <person name="Barrell B.G."/>
            <person name="Ferraz C."/>
            <person name="Vidal S."/>
            <person name="Brun C."/>
            <person name="Demailles J."/>
            <person name="Cadieu E."/>
            <person name="Dreano S."/>
            <person name="Gloux S."/>
            <person name="Lelaure V."/>
            <person name="Mottier S."/>
            <person name="Galibert F."/>
            <person name="Borkova D."/>
            <person name="Minana B."/>
            <person name="Kafatos F.C."/>
            <person name="Louis C."/>
            <person name="Siden-Kiamos I."/>
            <person name="Bolshakov S."/>
            <person name="Papagiannakis G."/>
            <person name="Spanos L."/>
            <person name="Cox S."/>
            <person name="Madueno E."/>
            <person name="de Pablos B."/>
            <person name="Modolell J."/>
            <person name="Peter A."/>
            <person name="Schoettler P."/>
            <person name="Werner M."/>
            <person name="Mourkioti F."/>
            <person name="Beinert N."/>
            <person name="Dowe G."/>
            <person name="Schaefer U."/>
            <person name="Jaeckle H."/>
            <person name="Bucheton A."/>
            <person name="Callister D.M."/>
            <person name="Campbell L.A."/>
            <person name="Darlamitsou A."/>
            <person name="Henderson N.S."/>
            <person name="McMillan P.J."/>
            <person name="Salles C."/>
            <person name="Tait E.A."/>
            <person name="Valenti P."/>
            <person name="Saunders R.D.C."/>
            <person name="Glover D.M."/>
        </authorList>
    </citation>
    <scope>NUCLEOTIDE SEQUENCE [LARGE SCALE GENOMIC DNA]</scope>
    <source>
        <strain>Oregon-R</strain>
    </source>
</reference>
<reference key="4">
    <citation type="journal article" date="2002" name="Genome Biol.">
        <title>A Drosophila full-length cDNA resource.</title>
        <authorList>
            <person name="Stapleton M."/>
            <person name="Carlson J.W."/>
            <person name="Brokstein P."/>
            <person name="Yu C."/>
            <person name="Champe M."/>
            <person name="George R.A."/>
            <person name="Guarin H."/>
            <person name="Kronmiller B."/>
            <person name="Pacleb J.M."/>
            <person name="Park S."/>
            <person name="Wan K.H."/>
            <person name="Rubin G.M."/>
            <person name="Celniker S.E."/>
        </authorList>
    </citation>
    <scope>NUCLEOTIDE SEQUENCE [LARGE SCALE MRNA]</scope>
    <source>
        <strain>Berkeley</strain>
        <tissue>Embryo</tissue>
    </source>
</reference>
<reference key="5">
    <citation type="journal article" date="2018" name="Science">
        <title>LZTR1 is a regulator of RAS ubiquitination and signaling.</title>
        <authorList>
            <person name="Bigenzahn J.W."/>
            <person name="Collu G.M."/>
            <person name="Kartnig F."/>
            <person name="Pieraks M."/>
            <person name="Vladimer G.I."/>
            <person name="Heinz L.X."/>
            <person name="Sedlyarov V."/>
            <person name="Schischlik F."/>
            <person name="Fauster A."/>
            <person name="Rebsamen M."/>
            <person name="Parapatics K."/>
            <person name="Blomen V.A."/>
            <person name="Mueller A.C."/>
            <person name="Winter G.E."/>
            <person name="Kralovics R."/>
            <person name="Brummelkamp T.R."/>
            <person name="Mlodzik M."/>
            <person name="Superti-Furga G."/>
        </authorList>
    </citation>
    <scope>FUNCTION</scope>
    <scope>DISRUPTION PHENOTYPE</scope>
</reference>
<reference key="6">
    <citation type="journal article" date="2020" name="PLoS Genet.">
        <title>Analysis of genes within the schizophrenia-linked 22q11.2 deletion identifies interaction of night owl/LZTR1 and NF1 in GABAergic sleep control.</title>
        <authorList>
            <person name="Maurer G.W."/>
            <person name="Malita A."/>
            <person name="Nagy S."/>
            <person name="Koyama T."/>
            <person name="Werge T.M."/>
            <person name="Halberg K.A."/>
            <person name="Texada M.J."/>
            <person name="Rewitz K."/>
        </authorList>
    </citation>
    <scope>FUNCTION</scope>
    <scope>TISSUE SPECIFICITY</scope>
    <scope>DISRUPTION PHENOTYPE</scope>
</reference>
<dbReference type="EMBL" id="AE014298">
    <property type="protein sequence ID" value="AAF45563.1"/>
    <property type="molecule type" value="Genomic_DNA"/>
</dbReference>
<dbReference type="EMBL" id="AL109630">
    <property type="protein sequence ID" value="CAB65872.1"/>
    <property type="molecule type" value="Genomic_DNA"/>
</dbReference>
<dbReference type="RefSeq" id="NP_569869.2">
    <property type="nucleotide sequence ID" value="NM_130513.4"/>
</dbReference>
<dbReference type="SMR" id="Q9V410"/>
<dbReference type="FunCoup" id="Q9V410">
    <property type="interactions" value="1203"/>
</dbReference>
<dbReference type="IntAct" id="Q9V410">
    <property type="interactions" value="6"/>
</dbReference>
<dbReference type="STRING" id="7227.FBpp0303735"/>
<dbReference type="PaxDb" id="7227-FBpp0070184"/>
<dbReference type="DNASU" id="31037"/>
<dbReference type="EnsemblMetazoa" id="FBtr0343361">
    <property type="protein sequence ID" value="FBpp0310018"/>
    <property type="gene ID" value="FBgn0040344"/>
</dbReference>
<dbReference type="GeneID" id="31037"/>
<dbReference type="KEGG" id="dme:Dmel_CG3711"/>
<dbReference type="UCSC" id="CG3711-RA">
    <property type="organism name" value="d. melanogaster"/>
</dbReference>
<dbReference type="AGR" id="FB:FBgn0040344"/>
<dbReference type="CTD" id="8216"/>
<dbReference type="FlyBase" id="FBgn0040344">
    <property type="gene designation" value="Lztr1"/>
</dbReference>
<dbReference type="VEuPathDB" id="VectorBase:FBgn0040344"/>
<dbReference type="GeneTree" id="ENSGT00940000158190"/>
<dbReference type="HOGENOM" id="CLU_012081_0_0_1"/>
<dbReference type="InParanoid" id="Q9V410"/>
<dbReference type="OMA" id="YKEAIYV"/>
<dbReference type="OrthoDB" id="10250130at2759"/>
<dbReference type="PhylomeDB" id="Q9V410"/>
<dbReference type="UniPathway" id="UPA00143"/>
<dbReference type="BioGRID-ORCS" id="31037">
    <property type="hits" value="0 hits in 1 CRISPR screen"/>
</dbReference>
<dbReference type="GenomeRNAi" id="31037"/>
<dbReference type="PRO" id="PR:Q9V410"/>
<dbReference type="Proteomes" id="UP000000803">
    <property type="component" value="Chromosome X"/>
</dbReference>
<dbReference type="Bgee" id="FBgn0040344">
    <property type="expression patterns" value="Expressed in eye disc (Drosophila) and 54 other cell types or tissues"/>
</dbReference>
<dbReference type="ExpressionAtlas" id="Q9V410">
    <property type="expression patterns" value="baseline and differential"/>
</dbReference>
<dbReference type="GO" id="GO:0005794">
    <property type="term" value="C:Golgi apparatus"/>
    <property type="evidence" value="ECO:0000318"/>
    <property type="project" value="GO_Central"/>
</dbReference>
<dbReference type="GO" id="GO:0007214">
    <property type="term" value="P:gamma-aminobutyric acid signaling pathway"/>
    <property type="evidence" value="ECO:0000315"/>
    <property type="project" value="UniProtKB"/>
</dbReference>
<dbReference type="GO" id="GO:0046580">
    <property type="term" value="P:negative regulation of Ras protein signal transduction"/>
    <property type="evidence" value="ECO:0000315"/>
    <property type="project" value="UniProtKB"/>
</dbReference>
<dbReference type="GO" id="GO:0070875">
    <property type="term" value="P:positive regulation of glycogen metabolic process"/>
    <property type="evidence" value="ECO:0000315"/>
    <property type="project" value="UniProtKB"/>
</dbReference>
<dbReference type="GO" id="GO:0016567">
    <property type="term" value="P:protein ubiquitination"/>
    <property type="evidence" value="ECO:0007669"/>
    <property type="project" value="UniProtKB-UniPathway"/>
</dbReference>
<dbReference type="GO" id="GO:0030431">
    <property type="term" value="P:sleep"/>
    <property type="evidence" value="ECO:0000316"/>
    <property type="project" value="UniProtKB"/>
</dbReference>
<dbReference type="GO" id="GO:0070328">
    <property type="term" value="P:triglyceride homeostasis"/>
    <property type="evidence" value="ECO:0000315"/>
    <property type="project" value="UniProtKB"/>
</dbReference>
<dbReference type="CDD" id="cd18505">
    <property type="entry name" value="BACK1_LZTR1"/>
    <property type="match status" value="1"/>
</dbReference>
<dbReference type="CDD" id="cd18506">
    <property type="entry name" value="BACK2_LZTR1"/>
    <property type="match status" value="1"/>
</dbReference>
<dbReference type="CDD" id="cd18308">
    <property type="entry name" value="BTB1_POZ_LZTR1"/>
    <property type="match status" value="1"/>
</dbReference>
<dbReference type="CDD" id="cd18309">
    <property type="entry name" value="BTB2_POZ_LZTR1"/>
    <property type="match status" value="1"/>
</dbReference>
<dbReference type="FunFam" id="2.120.10.80:FF:000090">
    <property type="entry name" value="Leucine-zipper transcriptional regulator 1"/>
    <property type="match status" value="1"/>
</dbReference>
<dbReference type="FunFam" id="3.30.710.10:FF:000145">
    <property type="entry name" value="leucine-zipper-like transcriptional regulator 1"/>
    <property type="match status" value="1"/>
</dbReference>
<dbReference type="FunFam" id="3.30.710.10:FF:000243">
    <property type="entry name" value="Leucine-zipper-like transcriptional regulator 1 homolog"/>
    <property type="match status" value="1"/>
</dbReference>
<dbReference type="Gene3D" id="1.25.40.420">
    <property type="match status" value="1"/>
</dbReference>
<dbReference type="Gene3D" id="2.120.10.80">
    <property type="entry name" value="Kelch-type beta propeller"/>
    <property type="match status" value="2"/>
</dbReference>
<dbReference type="Gene3D" id="3.30.710.10">
    <property type="entry name" value="Potassium Channel Kv1.1, Chain A"/>
    <property type="match status" value="2"/>
</dbReference>
<dbReference type="InterPro" id="IPR000210">
    <property type="entry name" value="BTB/POZ_dom"/>
</dbReference>
<dbReference type="InterPro" id="IPR015915">
    <property type="entry name" value="Kelch-typ_b-propeller"/>
</dbReference>
<dbReference type="InterPro" id="IPR051568">
    <property type="entry name" value="LZTR1/Attractin"/>
</dbReference>
<dbReference type="InterPro" id="IPR011333">
    <property type="entry name" value="SKP1/BTB/POZ_sf"/>
</dbReference>
<dbReference type="PANTHER" id="PTHR46376">
    <property type="entry name" value="LEUCINE-ZIPPER-LIKE TRANSCRIPTIONAL REGULATOR 1"/>
    <property type="match status" value="1"/>
</dbReference>
<dbReference type="PANTHER" id="PTHR46376:SF1">
    <property type="entry name" value="LEUCINE-ZIPPER-LIKE TRANSCRIPTIONAL REGULATOR 1"/>
    <property type="match status" value="1"/>
</dbReference>
<dbReference type="Pfam" id="PF00651">
    <property type="entry name" value="BTB"/>
    <property type="match status" value="2"/>
</dbReference>
<dbReference type="Pfam" id="PF24681">
    <property type="entry name" value="Kelch_KLHDC2_KLHL20_DRC7"/>
    <property type="match status" value="2"/>
</dbReference>
<dbReference type="SMART" id="SM00225">
    <property type="entry name" value="BTB"/>
    <property type="match status" value="2"/>
</dbReference>
<dbReference type="SUPFAM" id="SSF117281">
    <property type="entry name" value="Kelch motif"/>
    <property type="match status" value="1"/>
</dbReference>
<dbReference type="SUPFAM" id="SSF54695">
    <property type="entry name" value="POZ domain"/>
    <property type="match status" value="2"/>
</dbReference>
<dbReference type="PROSITE" id="PS50097">
    <property type="entry name" value="BTB"/>
    <property type="match status" value="2"/>
</dbReference>
<feature type="chain" id="PRO_0000446385" description="Leucine-zipper-like transcriptional regulator 1 homolog">
    <location>
        <begin position="1"/>
        <end position="975"/>
    </location>
</feature>
<feature type="repeat" description="Kelch 1" evidence="2">
    <location>
        <begin position="263"/>
        <end position="312"/>
    </location>
</feature>
<feature type="repeat" description="Kelch 2" evidence="2">
    <location>
        <begin position="314"/>
        <end position="369"/>
    </location>
</feature>
<feature type="repeat" description="Kelch 3" evidence="2">
    <location>
        <begin position="370"/>
        <end position="417"/>
    </location>
</feature>
<feature type="repeat" description="Kelch 4" evidence="2">
    <location>
        <begin position="421"/>
        <end position="467"/>
    </location>
</feature>
<feature type="repeat" description="Kelch 5" evidence="2">
    <location>
        <begin position="478"/>
        <end position="524"/>
    </location>
</feature>
<feature type="repeat" description="Kelch 6" evidence="2">
    <location>
        <begin position="530"/>
        <end position="581"/>
    </location>
</feature>
<feature type="domain" description="BTB 1" evidence="3">
    <location>
        <begin position="574"/>
        <end position="670"/>
    </location>
</feature>
<feature type="domain" description="BTB 2" evidence="3">
    <location>
        <begin position="801"/>
        <end position="870"/>
    </location>
</feature>
<feature type="region of interest" description="Disordered" evidence="4">
    <location>
        <begin position="16"/>
        <end position="41"/>
    </location>
</feature>
<feature type="region of interest" description="Disordered" evidence="4">
    <location>
        <begin position="158"/>
        <end position="186"/>
    </location>
</feature>
<feature type="compositionally biased region" description="Gly residues" evidence="4">
    <location>
        <begin position="16"/>
        <end position="32"/>
    </location>
</feature>
<feature type="compositionally biased region" description="Low complexity" evidence="4">
    <location>
        <begin position="174"/>
        <end position="186"/>
    </location>
</feature>
<sequence length="975" mass="106435">MLKSISGGVGVASTERGGGGGGCGGGGAGGSASGSRSTSGSGRASCGLGSSSISSGLSAVCGFVTGASGGGGFERDRDRDRGLANISGGSTPAGILYCPACMAAANQQSPSQNSSPHHESFFLRSSFKSSKRNKARKSASTAGCLDAQHIRANLRMSMSSSMRSSRGNGGGGAASSSHPPGSSCSSGPGGSGCSMAYDAASNASSGSGSGSGKATSPGSYSCNALNVDFTSYTATHQWTRMLECAEFVGAKRSKHTVVAYKDAMFVFGGDNGKNMLNDLIRFGVKDKSWGRACATGTPPAPRYHHSAVVAGSSMFIFGGYTGDIHSNSNLTNKNDLFEYKFQSAMWVEWKFSGRQPVPRSAHGAAVYDNKMWIYAGYDGNARLNDMWTLNLTGENQWEEVDQLGDRPPTCCNFPVAVARDAMYVFSGQSGLQITNSLFEFHFKTRTWRRISNEPVLRGATSAPPSRRYGHTMVHHDRFLYVFGGSADSTLPNDLHCYDLDSQVWSVIQPEQNSDVPSGRVFHASAVICDAMYIFGGTVDNSVRRGDTYRFQFSSYPKCTLRDDFGKFFQDKQFCDIQFIVGAEEIRILAHIAFVAARSKYLRNKILAAREARQQQMEKVYGVGQVDALALNAGAGGDRGPMLEVRLANASPEAFEIILNYIYTDRIDLKDTYSKNIIILITDIYQLAGLFTMPRLAHGCIQYLDYKINKLNVLEALYNADKSNIKIIKDHCMQFIIKEENFTDVVMSSEFSDLDKPLLVEIIRKRLYPSKLVIDTSYEGNIGTTLEIDLCAFLESTGKDFCDISLVLEDHVIPAHKSVLSSRCTYFQGMFRSFMPPDNTVNIQIGEISPSLEAFHSLLRYIYYGETKMPPQDALYLFQAPCFYGLANNRLHAFCKYSLEHNITFENVLQTLEASDITKIYDIKEYALKLIVKDFAKVARLPKIAGLSRELLLEIIRAVADSHGEFLTRININTDI</sequence>
<organism>
    <name type="scientific">Drosophila melanogaster</name>
    <name type="common">Fruit fly</name>
    <dbReference type="NCBI Taxonomy" id="7227"/>
    <lineage>
        <taxon>Eukaryota</taxon>
        <taxon>Metazoa</taxon>
        <taxon>Ecdysozoa</taxon>
        <taxon>Arthropoda</taxon>
        <taxon>Hexapoda</taxon>
        <taxon>Insecta</taxon>
        <taxon>Pterygota</taxon>
        <taxon>Neoptera</taxon>
        <taxon>Endopterygota</taxon>
        <taxon>Diptera</taxon>
        <taxon>Brachycera</taxon>
        <taxon>Muscomorpha</taxon>
        <taxon>Ephydroidea</taxon>
        <taxon>Drosophilidae</taxon>
        <taxon>Drosophila</taxon>
        <taxon>Sophophora</taxon>
    </lineage>
</organism>
<keyword id="KW-0880">Kelch repeat</keyword>
<keyword id="KW-1185">Reference proteome</keyword>
<keyword id="KW-0677">Repeat</keyword>
<keyword id="KW-0833">Ubl conjugation pathway</keyword>
<protein>
    <recommendedName>
        <fullName evidence="7">Leucine-zipper-like transcriptional regulator 1 homolog</fullName>
    </recommendedName>
</protein>
<accession>Q9V410</accession>
<name>LZTR1_DROME</name>
<gene>
    <name evidence="7 10" type="primary">Lztr1</name>
    <name evidence="8" type="synonym">night owl</name>
    <name evidence="8" type="synonym">nowl</name>
    <name evidence="10" type="ORF">CG3711</name>
</gene>
<comment type="function">
    <text evidence="1 5 6">Inhibitor of Ras signaling (PubMed:30442766). Acts as a substrate-specific adapter of a BCR (BTB-CUL3-RBX1) E3 ubiquitin-protein ligase complex that mediates ubiquitination of Ras (By similarity). Together with Nf1, plays an important role for normal sleep behavior, mainly during the night (PubMed:32339168). Might affect sleep by modulating GABA signaling in Rdl-expressing neurons (PubMed:32339168). Might play a role in the regulation of brain glycogen metabolism and organismal levels of triglycerides (PubMed:32339168).</text>
</comment>
<comment type="pathway">
    <text evidence="1">Protein modification; protein ubiquitination.</text>
</comment>
<comment type="subunit">
    <text evidence="1">Component of some BCR (BTB-CUL3-RBX1) E3 ubiquitin-protein ligase complex.</text>
</comment>
<comment type="tissue specificity">
    <text evidence="6">Expressed in Rdl-expressing neurons of the mushroom body, the neurons projecting to the LC9 optic glomerulus and in a neuronal cluster near the subesophageal ganglion (at protein level).</text>
</comment>
<comment type="disruption phenotype">
    <text evidence="5 6">Flies are viable but most wings show wing vein defects characterized by extra veins and vein tissue, which are caused by an increase of Ras-MAPK signaling (PubMed:30442766, PubMed:32339168). Decreases sleep with night-time sleep-fragmentation patterns, primarily during the second part of the night (PubMed:32339168). RNAi-mediated knockdown in neurons of males results in reduced total sleep in combination with decreased locomotor activity, increased Ras-MAPK signaling and altered metabolism including reduced glycogen levels and increased levels of triglycerides (PubMed:32339168). RNAi- mediated knockdown in GABAA-receptor-expressing neurons causes a shortening of sleep bouts and an increase in their number during night, with an effect size similar to that seen with pan-neuronal knockdown (PubMed:32339168). RNAi-mediated knockdown in peripheral class-IV dendritic arborization neurons does not cause increased proliferation in the nervous system (PubMed:32339168). Adult-specific RNAi-mediated neuronal knockdown decreases night-time sleep compared to controls and caused an increased number of short sleep bouts during the night (PubMed:32339168). RNAi-mediated knockdown of in GABAB-receptor-expressing neurons or PDF-expressing clock neurons-had no significant effect on night-time sleep-bout number or duration (PubMed:32339168). Simultaneous knockdown of Lztr1 and Nf1 reduces total night-time sleep, increases night-time sleep fragmentation and activates the Ras pathway similarly to single knockdown (PubMed:32339168).</text>
</comment>
<comment type="similarity">
    <text evidence="9">Belongs to the LZTR1 family.</text>
</comment>